<accession>Q0KA16</accession>
<organism>
    <name type="scientific">Cupriavidus necator (strain ATCC 17699 / DSM 428 / KCTC 22496 / NCIMB 10442 / H16 / Stanier 337)</name>
    <name type="common">Ralstonia eutropha</name>
    <dbReference type="NCBI Taxonomy" id="381666"/>
    <lineage>
        <taxon>Bacteria</taxon>
        <taxon>Pseudomonadati</taxon>
        <taxon>Pseudomonadota</taxon>
        <taxon>Betaproteobacteria</taxon>
        <taxon>Burkholderiales</taxon>
        <taxon>Burkholderiaceae</taxon>
        <taxon>Cupriavidus</taxon>
    </lineage>
</organism>
<dbReference type="EMBL" id="AM260479">
    <property type="protein sequence ID" value="CAJ93155.1"/>
    <property type="molecule type" value="Genomic_DNA"/>
</dbReference>
<dbReference type="RefSeq" id="WP_010809601.1">
    <property type="nucleotide sequence ID" value="NZ_CP039287.1"/>
</dbReference>
<dbReference type="SMR" id="Q0KA16"/>
<dbReference type="STRING" id="381666.H16_A2055"/>
<dbReference type="KEGG" id="reh:H16_A2055"/>
<dbReference type="eggNOG" id="COG0052">
    <property type="taxonomic scope" value="Bacteria"/>
</dbReference>
<dbReference type="HOGENOM" id="CLU_040318_1_2_4"/>
<dbReference type="OrthoDB" id="9808036at2"/>
<dbReference type="Proteomes" id="UP000008210">
    <property type="component" value="Chromosome 1"/>
</dbReference>
<dbReference type="GO" id="GO:0022627">
    <property type="term" value="C:cytosolic small ribosomal subunit"/>
    <property type="evidence" value="ECO:0007669"/>
    <property type="project" value="TreeGrafter"/>
</dbReference>
<dbReference type="GO" id="GO:0003735">
    <property type="term" value="F:structural constituent of ribosome"/>
    <property type="evidence" value="ECO:0007669"/>
    <property type="project" value="InterPro"/>
</dbReference>
<dbReference type="GO" id="GO:0006412">
    <property type="term" value="P:translation"/>
    <property type="evidence" value="ECO:0007669"/>
    <property type="project" value="UniProtKB-UniRule"/>
</dbReference>
<dbReference type="CDD" id="cd01425">
    <property type="entry name" value="RPS2"/>
    <property type="match status" value="1"/>
</dbReference>
<dbReference type="FunFam" id="1.10.287.610:FF:000001">
    <property type="entry name" value="30S ribosomal protein S2"/>
    <property type="match status" value="1"/>
</dbReference>
<dbReference type="Gene3D" id="3.40.50.10490">
    <property type="entry name" value="Glucose-6-phosphate isomerase like protein, domain 1"/>
    <property type="match status" value="1"/>
</dbReference>
<dbReference type="Gene3D" id="1.10.287.610">
    <property type="entry name" value="Helix hairpin bin"/>
    <property type="match status" value="1"/>
</dbReference>
<dbReference type="HAMAP" id="MF_00291_B">
    <property type="entry name" value="Ribosomal_uS2_B"/>
    <property type="match status" value="1"/>
</dbReference>
<dbReference type="InterPro" id="IPR001865">
    <property type="entry name" value="Ribosomal_uS2"/>
</dbReference>
<dbReference type="InterPro" id="IPR005706">
    <property type="entry name" value="Ribosomal_uS2_bac/mit/plastid"/>
</dbReference>
<dbReference type="InterPro" id="IPR023591">
    <property type="entry name" value="Ribosomal_uS2_flav_dom_sf"/>
</dbReference>
<dbReference type="NCBIfam" id="TIGR01011">
    <property type="entry name" value="rpsB_bact"/>
    <property type="match status" value="1"/>
</dbReference>
<dbReference type="PANTHER" id="PTHR12534">
    <property type="entry name" value="30S RIBOSOMAL PROTEIN S2 PROKARYOTIC AND ORGANELLAR"/>
    <property type="match status" value="1"/>
</dbReference>
<dbReference type="PANTHER" id="PTHR12534:SF0">
    <property type="entry name" value="SMALL RIBOSOMAL SUBUNIT PROTEIN US2M"/>
    <property type="match status" value="1"/>
</dbReference>
<dbReference type="Pfam" id="PF00318">
    <property type="entry name" value="Ribosomal_S2"/>
    <property type="match status" value="1"/>
</dbReference>
<dbReference type="PRINTS" id="PR00395">
    <property type="entry name" value="RIBOSOMALS2"/>
</dbReference>
<dbReference type="SUPFAM" id="SSF52313">
    <property type="entry name" value="Ribosomal protein S2"/>
    <property type="match status" value="1"/>
</dbReference>
<comment type="similarity">
    <text evidence="1">Belongs to the universal ribosomal protein uS2 family.</text>
</comment>
<evidence type="ECO:0000255" key="1">
    <source>
        <dbReference type="HAMAP-Rule" id="MF_00291"/>
    </source>
</evidence>
<evidence type="ECO:0000305" key="2"/>
<proteinExistence type="inferred from homology"/>
<sequence>MSVTMREMLEAGCHFGHQTRFWNPKMAPFIFGHRNKIHIINLEKTLPMFQDAMKYVRQLAANRGTILFVGTKRQSREILAEEAGRAGMPYVDARWLGGMLTNFKTVKTSIKRLKDMEAAKEAGALETMSKKEALMFEREMLKLEKSIGGIKDMGGVPDAIFVVDVGYHKIAVTEANKLGVPVIGVVDTNHSPEGIDYVIPGNDDSSKAVALYVRGVADAILEGRANAVQEVVEAARGGDDEFVEVQEG</sequence>
<name>RS2_CUPNH</name>
<protein>
    <recommendedName>
        <fullName evidence="1">Small ribosomal subunit protein uS2</fullName>
    </recommendedName>
    <alternativeName>
        <fullName evidence="2">30S ribosomal protein S2</fullName>
    </alternativeName>
</protein>
<gene>
    <name evidence="1" type="primary">rpsB</name>
    <name type="ordered locus">H16_A2055</name>
</gene>
<keyword id="KW-1185">Reference proteome</keyword>
<keyword id="KW-0687">Ribonucleoprotein</keyword>
<keyword id="KW-0689">Ribosomal protein</keyword>
<feature type="chain" id="PRO_1000004040" description="Small ribosomal subunit protein uS2">
    <location>
        <begin position="1"/>
        <end position="248"/>
    </location>
</feature>
<reference key="1">
    <citation type="journal article" date="2006" name="Nat. Biotechnol.">
        <title>Genome sequence of the bioplastic-producing 'Knallgas' bacterium Ralstonia eutropha H16.</title>
        <authorList>
            <person name="Pohlmann A."/>
            <person name="Fricke W.F."/>
            <person name="Reinecke F."/>
            <person name="Kusian B."/>
            <person name="Liesegang H."/>
            <person name="Cramm R."/>
            <person name="Eitinger T."/>
            <person name="Ewering C."/>
            <person name="Poetter M."/>
            <person name="Schwartz E."/>
            <person name="Strittmatter A."/>
            <person name="Voss I."/>
            <person name="Gottschalk G."/>
            <person name="Steinbuechel A."/>
            <person name="Friedrich B."/>
            <person name="Bowien B."/>
        </authorList>
    </citation>
    <scope>NUCLEOTIDE SEQUENCE [LARGE SCALE GENOMIC DNA]</scope>
    <source>
        <strain>ATCC 17699 / DSM 428 / KCTC 22496 / NCIMB 10442 / H16 / Stanier 337</strain>
    </source>
</reference>